<dbReference type="PIR" id="A61129">
    <property type="entry name" value="A61129"/>
</dbReference>
<dbReference type="SMR" id="P69047"/>
<dbReference type="GO" id="GO:0005615">
    <property type="term" value="C:extracellular space"/>
    <property type="evidence" value="ECO:0007669"/>
    <property type="project" value="TreeGrafter"/>
</dbReference>
<dbReference type="GO" id="GO:0005179">
    <property type="term" value="F:hormone activity"/>
    <property type="evidence" value="ECO:0007669"/>
    <property type="project" value="UniProtKB-KW"/>
</dbReference>
<dbReference type="GO" id="GO:0006006">
    <property type="term" value="P:glucose metabolic process"/>
    <property type="evidence" value="ECO:0007669"/>
    <property type="project" value="UniProtKB-KW"/>
</dbReference>
<dbReference type="CDD" id="cd04367">
    <property type="entry name" value="IlGF_insulin_like"/>
    <property type="match status" value="1"/>
</dbReference>
<dbReference type="Gene3D" id="1.10.100.10">
    <property type="entry name" value="Insulin-like"/>
    <property type="match status" value="1"/>
</dbReference>
<dbReference type="InterPro" id="IPR004825">
    <property type="entry name" value="Insulin"/>
</dbReference>
<dbReference type="InterPro" id="IPR016179">
    <property type="entry name" value="Insulin-like"/>
</dbReference>
<dbReference type="InterPro" id="IPR036438">
    <property type="entry name" value="Insulin-like_sf"/>
</dbReference>
<dbReference type="InterPro" id="IPR022353">
    <property type="entry name" value="Insulin_CS"/>
</dbReference>
<dbReference type="InterPro" id="IPR022352">
    <property type="entry name" value="Insulin_family"/>
</dbReference>
<dbReference type="PANTHER" id="PTHR11454:SF9">
    <property type="entry name" value="INSULIN"/>
    <property type="match status" value="1"/>
</dbReference>
<dbReference type="PANTHER" id="PTHR11454">
    <property type="entry name" value="INSULIN/INSULIN GROWTH FACTOR"/>
    <property type="match status" value="1"/>
</dbReference>
<dbReference type="Pfam" id="PF00049">
    <property type="entry name" value="Insulin"/>
    <property type="match status" value="1"/>
</dbReference>
<dbReference type="PRINTS" id="PR00277">
    <property type="entry name" value="INSULIN"/>
</dbReference>
<dbReference type="PRINTS" id="PR00276">
    <property type="entry name" value="INSULINFAMLY"/>
</dbReference>
<dbReference type="SMART" id="SM00078">
    <property type="entry name" value="IlGF"/>
    <property type="match status" value="1"/>
</dbReference>
<dbReference type="SUPFAM" id="SSF56994">
    <property type="entry name" value="Insulin-like"/>
    <property type="match status" value="1"/>
</dbReference>
<dbReference type="PROSITE" id="PS00262">
    <property type="entry name" value="INSULIN"/>
    <property type="match status" value="1"/>
</dbReference>
<evidence type="ECO:0000250" key="1"/>
<evidence type="ECO:0000305" key="2"/>
<organism>
    <name type="scientific">Trachemys dorbigni</name>
    <name type="common">Black-bellied slider turtle</name>
    <name type="synonym">Chrysemys dorbigni</name>
    <dbReference type="NCBI Taxonomy" id="31137"/>
    <lineage>
        <taxon>Eukaryota</taxon>
        <taxon>Metazoa</taxon>
        <taxon>Chordata</taxon>
        <taxon>Craniata</taxon>
        <taxon>Vertebrata</taxon>
        <taxon>Euteleostomi</taxon>
        <taxon>Archelosauria</taxon>
        <taxon>Testudinata</taxon>
        <taxon>Testudines</taxon>
        <taxon>Cryptodira</taxon>
        <taxon>Durocryptodira</taxon>
        <taxon>Testudinoidea</taxon>
        <taxon>Emydidae</taxon>
        <taxon>Trachemys</taxon>
    </lineage>
</organism>
<keyword id="KW-0119">Carbohydrate metabolism</keyword>
<keyword id="KW-0903">Direct protein sequencing</keyword>
<keyword id="KW-1015">Disulfide bond</keyword>
<keyword id="KW-0313">Glucose metabolism</keyword>
<keyword id="KW-0372">Hormone</keyword>
<keyword id="KW-0964">Secreted</keyword>
<reference key="1">
    <citation type="journal article" date="1991" name="Gen. Comp. Endocrinol.">
        <title>Isolation, purification and primary structure of insulin from the turtle Chrysemys dorbigni.</title>
        <authorList>
            <person name="Cascone O."/>
            <person name="Turyn D."/>
            <person name="Dellacha J.M."/>
            <person name="Machado V.L.A."/>
            <person name="Marques M."/>
            <person name="Vita N."/>
            <person name="Cassan C."/>
            <person name="Ferrara P."/>
            <person name="Guillemot J.-C."/>
        </authorList>
    </citation>
    <scope>PROTEIN SEQUENCE</scope>
</reference>
<feature type="peptide" id="PRO_0000015795" description="Insulin B chain">
    <location>
        <begin position="1"/>
        <end position="30"/>
    </location>
</feature>
<feature type="peptide" id="PRO_0000015796" description="Insulin A chain">
    <location>
        <begin position="31"/>
        <end position="51"/>
    </location>
</feature>
<feature type="disulfide bond" description="Interchain (between B and A chains)" evidence="1">
    <location>
        <begin position="7"/>
        <end position="37"/>
    </location>
</feature>
<feature type="disulfide bond" description="Interchain (between B and A chains)" evidence="1">
    <location>
        <begin position="19"/>
        <end position="50"/>
    </location>
</feature>
<feature type="disulfide bond" evidence="1">
    <location>
        <begin position="36"/>
        <end position="41"/>
    </location>
</feature>
<feature type="non-consecutive residues" evidence="2">
    <location>
        <begin position="30"/>
        <end position="31"/>
    </location>
</feature>
<gene>
    <name type="primary">INS</name>
</gene>
<comment type="function">
    <text>Insulin decreases blood glucose concentration. It increases cell permeability to monosaccharides, amino acids and fatty acids. It accelerates glycolysis, the pentose phosphate cycle, and glycogen synthesis in liver.</text>
</comment>
<comment type="subunit">
    <text>Heterodimer of a B chain and an A chain linked by two disulfide bonds.</text>
</comment>
<comment type="subcellular location">
    <subcellularLocation>
        <location>Secreted</location>
    </subcellularLocation>
</comment>
<comment type="similarity">
    <text evidence="2">Belongs to the insulin family.</text>
</comment>
<name>INS_TRADO</name>
<proteinExistence type="evidence at protein level"/>
<sequence length="51" mass="5698">AANQHLCGSHLVEALYLVCGERGFFYSPKAGIVEQCCHNTCSLYQLENYCN</sequence>
<accession>P69047</accession>
<accession>P31887</accession>
<protein>
    <recommendedName>
        <fullName>Insulin</fullName>
    </recommendedName>
    <component>
        <recommendedName>
            <fullName>Insulin B chain</fullName>
        </recommendedName>
    </component>
    <component>
        <recommendedName>
            <fullName>Insulin A chain</fullName>
        </recommendedName>
    </component>
</protein>